<feature type="chain" id="PRO_0000196646" description="Putative pyruvate, phosphate dikinase regulatory protein">
    <location>
        <begin position="1"/>
        <end position="271"/>
    </location>
</feature>
<feature type="binding site" evidence="1">
    <location>
        <begin position="147"/>
        <end position="154"/>
    </location>
    <ligand>
        <name>ADP</name>
        <dbReference type="ChEBI" id="CHEBI:456216"/>
    </ligand>
</feature>
<gene>
    <name type="ordered locus">CTC_00122</name>
</gene>
<keyword id="KW-0418">Kinase</keyword>
<keyword id="KW-0547">Nucleotide-binding</keyword>
<keyword id="KW-1185">Reference proteome</keyword>
<keyword id="KW-0723">Serine/threonine-protein kinase</keyword>
<keyword id="KW-0808">Transferase</keyword>
<protein>
    <recommendedName>
        <fullName evidence="1">Putative pyruvate, phosphate dikinase regulatory protein</fullName>
        <shortName evidence="1">PPDK regulatory protein</shortName>
        <ecNumber evidence="1">2.7.11.32</ecNumber>
        <ecNumber evidence="1">2.7.4.27</ecNumber>
    </recommendedName>
</protein>
<name>PDRP_CLOTE</name>
<accession>Q899P8</accession>
<evidence type="ECO:0000255" key="1">
    <source>
        <dbReference type="HAMAP-Rule" id="MF_00921"/>
    </source>
</evidence>
<reference key="1">
    <citation type="journal article" date="2003" name="Proc. Natl. Acad. Sci. U.S.A.">
        <title>The genome sequence of Clostridium tetani, the causative agent of tetanus disease.</title>
        <authorList>
            <person name="Brueggemann H."/>
            <person name="Baeumer S."/>
            <person name="Fricke W.F."/>
            <person name="Wiezer A."/>
            <person name="Liesegang H."/>
            <person name="Decker I."/>
            <person name="Herzberg C."/>
            <person name="Martinez-Arias R."/>
            <person name="Merkl R."/>
            <person name="Henne A."/>
            <person name="Gottschalk G."/>
        </authorList>
    </citation>
    <scope>NUCLEOTIDE SEQUENCE [LARGE SCALE GENOMIC DNA]</scope>
    <source>
        <strain>Massachusetts / E88</strain>
    </source>
</reference>
<organism>
    <name type="scientific">Clostridium tetani (strain Massachusetts / E88)</name>
    <dbReference type="NCBI Taxonomy" id="212717"/>
    <lineage>
        <taxon>Bacteria</taxon>
        <taxon>Bacillati</taxon>
        <taxon>Bacillota</taxon>
        <taxon>Clostridia</taxon>
        <taxon>Eubacteriales</taxon>
        <taxon>Clostridiaceae</taxon>
        <taxon>Clostridium</taxon>
    </lineage>
</organism>
<dbReference type="EC" id="2.7.11.32" evidence="1"/>
<dbReference type="EC" id="2.7.4.27" evidence="1"/>
<dbReference type="EMBL" id="AE015927">
    <property type="protein sequence ID" value="AAO34774.1"/>
    <property type="molecule type" value="Genomic_DNA"/>
</dbReference>
<dbReference type="RefSeq" id="WP_011098446.1">
    <property type="nucleotide sequence ID" value="NC_004557.1"/>
</dbReference>
<dbReference type="SMR" id="Q899P8"/>
<dbReference type="STRING" id="212717.CTC_00122"/>
<dbReference type="GeneID" id="24254123"/>
<dbReference type="KEGG" id="ctc:CTC_00122"/>
<dbReference type="HOGENOM" id="CLU_046206_2_1_9"/>
<dbReference type="OrthoDB" id="9782201at2"/>
<dbReference type="Proteomes" id="UP000001412">
    <property type="component" value="Chromosome"/>
</dbReference>
<dbReference type="GO" id="GO:0043531">
    <property type="term" value="F:ADP binding"/>
    <property type="evidence" value="ECO:0007669"/>
    <property type="project" value="UniProtKB-UniRule"/>
</dbReference>
<dbReference type="GO" id="GO:0005524">
    <property type="term" value="F:ATP binding"/>
    <property type="evidence" value="ECO:0007669"/>
    <property type="project" value="InterPro"/>
</dbReference>
<dbReference type="GO" id="GO:0016776">
    <property type="term" value="F:phosphotransferase activity, phosphate group as acceptor"/>
    <property type="evidence" value="ECO:0007669"/>
    <property type="project" value="UniProtKB-UniRule"/>
</dbReference>
<dbReference type="GO" id="GO:0004674">
    <property type="term" value="F:protein serine/threonine kinase activity"/>
    <property type="evidence" value="ECO:0007669"/>
    <property type="project" value="UniProtKB-UniRule"/>
</dbReference>
<dbReference type="HAMAP" id="MF_00921">
    <property type="entry name" value="PDRP"/>
    <property type="match status" value="1"/>
</dbReference>
<dbReference type="InterPro" id="IPR005177">
    <property type="entry name" value="Kinase-pyrophosphorylase"/>
</dbReference>
<dbReference type="InterPro" id="IPR026565">
    <property type="entry name" value="PPDK_reg"/>
</dbReference>
<dbReference type="NCBIfam" id="NF003742">
    <property type="entry name" value="PRK05339.1"/>
    <property type="match status" value="1"/>
</dbReference>
<dbReference type="PANTHER" id="PTHR31756">
    <property type="entry name" value="PYRUVATE, PHOSPHATE DIKINASE REGULATORY PROTEIN 1, CHLOROPLASTIC"/>
    <property type="match status" value="1"/>
</dbReference>
<dbReference type="PANTHER" id="PTHR31756:SF3">
    <property type="entry name" value="PYRUVATE, PHOSPHATE DIKINASE REGULATORY PROTEIN 1, CHLOROPLASTIC"/>
    <property type="match status" value="1"/>
</dbReference>
<dbReference type="Pfam" id="PF03618">
    <property type="entry name" value="Kinase-PPPase"/>
    <property type="match status" value="1"/>
</dbReference>
<sequence>MLTIYAVSDSIGETAEQVSKATARQFKERVDVKRVTYIRTFEAVDDFINSIKDPENSMLISTVVLVDIREFLVERCIERGIRIVNVLGPCISTASRVLKTTPTYEPGAVWNMDDRYYKKIEAMEFAMRYDDSKDYNGIKHADVILIGLSRTSKTPLCMYLANKGIKALNVPIMPEIPIPEELFEVDRTKLVGLTIDPIRLIEIRKHRMNKFNQLSSEIQYANGERVLEELEYADKIMRRLRCKIIDVTNRAIEDTALLIMEAIGYNGFRES</sequence>
<proteinExistence type="inferred from homology"/>
<comment type="function">
    <text evidence="1">Bifunctional serine/threonine kinase and phosphorylase involved in the regulation of the pyruvate, phosphate dikinase (PPDK) by catalyzing its phosphorylation/dephosphorylation.</text>
</comment>
<comment type="catalytic activity">
    <reaction evidence="1">
        <text>N(tele)-phospho-L-histidyl/L-threonyl-[pyruvate, phosphate dikinase] + ADP = N(tele)-phospho-L-histidyl/O-phospho-L-threonyl-[pyruvate, phosphate dikinase] + AMP + H(+)</text>
        <dbReference type="Rhea" id="RHEA:43692"/>
        <dbReference type="Rhea" id="RHEA-COMP:10650"/>
        <dbReference type="Rhea" id="RHEA-COMP:10651"/>
        <dbReference type="ChEBI" id="CHEBI:15378"/>
        <dbReference type="ChEBI" id="CHEBI:30013"/>
        <dbReference type="ChEBI" id="CHEBI:61977"/>
        <dbReference type="ChEBI" id="CHEBI:83586"/>
        <dbReference type="ChEBI" id="CHEBI:456215"/>
        <dbReference type="ChEBI" id="CHEBI:456216"/>
        <dbReference type="EC" id="2.7.11.32"/>
    </reaction>
</comment>
<comment type="catalytic activity">
    <reaction evidence="1">
        <text>N(tele)-phospho-L-histidyl/O-phospho-L-threonyl-[pyruvate, phosphate dikinase] + phosphate + H(+) = N(tele)-phospho-L-histidyl/L-threonyl-[pyruvate, phosphate dikinase] + diphosphate</text>
        <dbReference type="Rhea" id="RHEA:43696"/>
        <dbReference type="Rhea" id="RHEA-COMP:10650"/>
        <dbReference type="Rhea" id="RHEA-COMP:10651"/>
        <dbReference type="ChEBI" id="CHEBI:15378"/>
        <dbReference type="ChEBI" id="CHEBI:30013"/>
        <dbReference type="ChEBI" id="CHEBI:33019"/>
        <dbReference type="ChEBI" id="CHEBI:43474"/>
        <dbReference type="ChEBI" id="CHEBI:61977"/>
        <dbReference type="ChEBI" id="CHEBI:83586"/>
        <dbReference type="EC" id="2.7.4.27"/>
    </reaction>
</comment>
<comment type="similarity">
    <text evidence="1">Belongs to the pyruvate, phosphate/water dikinase regulatory protein family. PDRP subfamily.</text>
</comment>